<comment type="function">
    <text evidence="3 4 5 6">Calcium-binding chaperone that promotes folding, oligomeric assembly and quality control in the endoplasmic reticulum (ER) via the calreticulin/calnexin cycle (PubMed:1915668). This lectin interacts transiently with almost all of the monoglucosylated glycoproteins that are synthesized in the ER. Interacts with the DNA-binding domain of NR3C1 and mediates its nuclear export (By similarity). Involved in maternal gene expression regulation. May participate in oocyte maturation via the regulation of calcium homeostasis (By similarity). Present in the cortical granules of non-activated oocytes, is exocytosed during the cortical reaction in response to oocyte activation and might participate in the block to polyspermy (By similarity).</text>
</comment>
<comment type="subunit">
    <text evidence="1 2 3">Monomer. Component of an EIF2 complex at least composed of CELF1/CUGBP1, CALR, CALR3, EIF2S1, EIF2S2, HSP90B1 and HSPA5. Interacts with PDIA3/ERp57 and SPACA9 (By similarity). Interacts with TRIM21. Interacts with NR3C1. Interacts with PPIB. Interacts (via P-domain) with PDIA5. Interacts with CLCC1 (By similarity).</text>
</comment>
<comment type="subcellular location">
    <subcellularLocation>
        <location evidence="6">Endoplasmic reticulum lumen</location>
    </subcellularLocation>
    <subcellularLocation>
        <location evidence="3">Cytoplasm</location>
        <location evidence="3">Cytosol</location>
    </subcellularLocation>
    <subcellularLocation>
        <location evidence="3">Cytolytic granule</location>
    </subcellularLocation>
    <subcellularLocation>
        <location evidence="3">Secreted</location>
        <location evidence="3">Extracellular space</location>
        <location evidence="3">Extracellular matrix</location>
    </subcellularLocation>
    <subcellularLocation>
        <location evidence="3">Cell surface</location>
    </subcellularLocation>
    <subcellularLocation>
        <location evidence="4">Sarcoplasmic reticulum lumen</location>
    </subcellularLocation>
    <subcellularLocation>
        <location evidence="5">Cytoplasmic vesicle</location>
        <location evidence="5">Secretory vesicle</location>
        <location evidence="5">Cortical granule</location>
    </subcellularLocation>
    <text evidence="3 4 5">Also found in cell surface (T cells), cytosol and extracellular matrix. During oocyte maturation and after parthenogenetic activation accumulates in cortical granules. In pronuclear and early cleaved embryos localizes weakly to cytoplasm around nucleus and more strongly in the region near the cortex (By similarity). In cortical granules of non-activated oocytes, is exocytosed during the cortical reaction in response to oocyte activation (By similarity).</text>
</comment>
<comment type="tissue specificity">
    <text evidence="6">Pancreas.</text>
</comment>
<comment type="similarity">
    <text evidence="7">Belongs to the calreticulin family.</text>
</comment>
<proteinExistence type="evidence at protein level"/>
<name>CALR_CANLF</name>
<gene>
    <name type="primary">CALR</name>
</gene>
<reference key="1">
    <citation type="journal article" date="1991" name="Exp. Cell Res.">
        <title>Identification and immunolocalization of calreticulin in pancreatic cells: no evidence for 'calciosomes'.</title>
        <authorList>
            <person name="Michalak M."/>
            <person name="Baksh S."/>
            <person name="Opas M."/>
        </authorList>
    </citation>
    <scope>PROTEIN SEQUENCE</scope>
    <scope>FUNCTION</scope>
    <scope>SUBCELLULAR LOCATION</scope>
    <scope>TISSUE SPECIFICITY</scope>
    <source>
        <tissue>Pancreas</tissue>
    </source>
</reference>
<feature type="chain" id="PRO_0000208520" description="Calreticulin">
    <location>
        <begin position="1"/>
        <end position="24" status="greater than"/>
    </location>
</feature>
<feature type="non-terminal residue">
    <location>
        <position position="24"/>
    </location>
</feature>
<sequence>EPAIYFKEQFLDGXGFTDXRIKEK</sequence>
<protein>
    <recommendedName>
        <fullName>Calreticulin</fullName>
    </recommendedName>
    <alternativeName>
        <fullName>CRP55</fullName>
    </alternativeName>
    <alternativeName>
        <fullName>Calregulin</fullName>
    </alternativeName>
    <alternativeName>
        <fullName>Endoplasmic reticulum resident protein 60</fullName>
        <shortName>ERp60</shortName>
    </alternativeName>
    <alternativeName>
        <fullName>HACBP</fullName>
    </alternativeName>
</protein>
<keyword id="KW-0106">Calcium</keyword>
<keyword id="KW-0143">Chaperone</keyword>
<keyword id="KW-0963">Cytoplasm</keyword>
<keyword id="KW-0968">Cytoplasmic vesicle</keyword>
<keyword id="KW-0903">Direct protein sequencing</keyword>
<keyword id="KW-0256">Endoplasmic reticulum</keyword>
<keyword id="KW-0272">Extracellular matrix</keyword>
<keyword id="KW-0430">Lectin</keyword>
<keyword id="KW-0458">Lysosome</keyword>
<keyword id="KW-0479">Metal-binding</keyword>
<keyword id="KW-1185">Reference proteome</keyword>
<keyword id="KW-0703">Sarcoplasmic reticulum</keyword>
<keyword id="KW-0964">Secreted</keyword>
<keyword id="KW-0862">Zinc</keyword>
<dbReference type="PIR" id="A61141">
    <property type="entry name" value="A61141"/>
</dbReference>
<dbReference type="FunCoup" id="P28490">
    <property type="interactions" value="2612"/>
</dbReference>
<dbReference type="IntAct" id="P28490">
    <property type="interactions" value="1"/>
</dbReference>
<dbReference type="STRING" id="9615.ENSCAFP00000025174"/>
<dbReference type="InParanoid" id="P28490"/>
<dbReference type="OrthoDB" id="1938156at2759"/>
<dbReference type="Proteomes" id="UP000002254">
    <property type="component" value="Unplaced"/>
</dbReference>
<dbReference type="Proteomes" id="UP000694429">
    <property type="component" value="Unplaced"/>
</dbReference>
<dbReference type="Proteomes" id="UP000694542">
    <property type="component" value="Unplaced"/>
</dbReference>
<dbReference type="Proteomes" id="UP000805418">
    <property type="component" value="Unplaced"/>
</dbReference>
<dbReference type="GO" id="GO:0009986">
    <property type="term" value="C:cell surface"/>
    <property type="evidence" value="ECO:0007669"/>
    <property type="project" value="UniProtKB-SubCell"/>
</dbReference>
<dbReference type="GO" id="GO:0060473">
    <property type="term" value="C:cortical granule"/>
    <property type="evidence" value="ECO:0000250"/>
    <property type="project" value="UniProtKB"/>
</dbReference>
<dbReference type="GO" id="GO:0044194">
    <property type="term" value="C:cytolytic granule"/>
    <property type="evidence" value="ECO:0007669"/>
    <property type="project" value="UniProtKB-SubCell"/>
</dbReference>
<dbReference type="GO" id="GO:0005829">
    <property type="term" value="C:cytosol"/>
    <property type="evidence" value="ECO:0007669"/>
    <property type="project" value="UniProtKB-SubCell"/>
</dbReference>
<dbReference type="GO" id="GO:0005576">
    <property type="term" value="C:extracellular region"/>
    <property type="evidence" value="ECO:0007669"/>
    <property type="project" value="UniProtKB-KW"/>
</dbReference>
<dbReference type="GO" id="GO:0033018">
    <property type="term" value="C:sarcoplasmic reticulum lumen"/>
    <property type="evidence" value="ECO:0007669"/>
    <property type="project" value="UniProtKB-SubCell"/>
</dbReference>
<dbReference type="GO" id="GO:0005509">
    <property type="term" value="F:calcium ion binding"/>
    <property type="evidence" value="ECO:0000250"/>
    <property type="project" value="UniProtKB"/>
</dbReference>
<dbReference type="GO" id="GO:0030246">
    <property type="term" value="F:carbohydrate binding"/>
    <property type="evidence" value="ECO:0007669"/>
    <property type="project" value="UniProtKB-KW"/>
</dbReference>
<dbReference type="GO" id="GO:0050821">
    <property type="term" value="P:protein stabilization"/>
    <property type="evidence" value="ECO:0000250"/>
    <property type="project" value="UniProtKB"/>
</dbReference>
<accession>P28490</accession>
<evidence type="ECO:0000250" key="1">
    <source>
        <dbReference type="UniProtKB" id="P14211"/>
    </source>
</evidence>
<evidence type="ECO:0000250" key="2">
    <source>
        <dbReference type="UniProtKB" id="P18418"/>
    </source>
</evidence>
<evidence type="ECO:0000250" key="3">
    <source>
        <dbReference type="UniProtKB" id="P27797"/>
    </source>
</evidence>
<evidence type="ECO:0000250" key="4">
    <source>
        <dbReference type="UniProtKB" id="P28491"/>
    </source>
</evidence>
<evidence type="ECO:0000250" key="5">
    <source>
        <dbReference type="UniProtKB" id="Q8K3H7"/>
    </source>
</evidence>
<evidence type="ECO:0000269" key="6">
    <source>
    </source>
</evidence>
<evidence type="ECO:0000305" key="7"/>
<organism>
    <name type="scientific">Canis lupus familiaris</name>
    <name type="common">Dog</name>
    <name type="synonym">Canis familiaris</name>
    <dbReference type="NCBI Taxonomy" id="9615"/>
    <lineage>
        <taxon>Eukaryota</taxon>
        <taxon>Metazoa</taxon>
        <taxon>Chordata</taxon>
        <taxon>Craniata</taxon>
        <taxon>Vertebrata</taxon>
        <taxon>Euteleostomi</taxon>
        <taxon>Mammalia</taxon>
        <taxon>Eutheria</taxon>
        <taxon>Laurasiatheria</taxon>
        <taxon>Carnivora</taxon>
        <taxon>Caniformia</taxon>
        <taxon>Canidae</taxon>
        <taxon>Canis</taxon>
    </lineage>
</organism>